<proteinExistence type="evidence at transcript level"/>
<accession>Q967G1</accession>
<protein>
    <recommendedName>
        <fullName evidence="2">Small ribosomal subunit protein eS17</fullName>
    </recommendedName>
    <alternativeName>
        <fullName>40S ribosomal protein S17</fullName>
    </alternativeName>
</protein>
<sequence length="131" mass="15369">MGRVRTKTVKRAARQIVEKYYGKLGLDFQYNKKVAEEVALIPSKRMRNKVAGFITHLMRRIQKGPVRGISLKLQEEERERRMDYIPEKSELEVPVIQVDQDTADMLNFLKISLPNLKVMSFNAHEHREDTK</sequence>
<keyword id="KW-0687">Ribonucleoprotein</keyword>
<keyword id="KW-0689">Ribosomal protein</keyword>
<feature type="initiator methionine" description="Removed" evidence="1">
    <location>
        <position position="1"/>
    </location>
</feature>
<feature type="chain" id="PRO_0000141537" description="Small ribosomal subunit protein eS17">
    <location>
        <begin position="2"/>
        <end position="131"/>
    </location>
</feature>
<reference key="1">
    <citation type="journal article" date="2002" name="Int. J. Parasitol.">
        <title>Identification of a 40S ribosomal protein (S17) that is differentially expressed between the macroschizont and piroplasm stages of Theileria annulata.</title>
        <authorList>
            <person name="Oura C.A.L."/>
            <person name="Kinnaird J."/>
            <person name="Tait A."/>
            <person name="Shiels B.R."/>
        </authorList>
    </citation>
    <scope>NUCLEOTIDE SEQUENCE [MRNA]</scope>
</reference>
<name>RS17_THEAN</name>
<organism>
    <name type="scientific">Theileria annulata</name>
    <dbReference type="NCBI Taxonomy" id="5874"/>
    <lineage>
        <taxon>Eukaryota</taxon>
        <taxon>Sar</taxon>
        <taxon>Alveolata</taxon>
        <taxon>Apicomplexa</taxon>
        <taxon>Aconoidasida</taxon>
        <taxon>Piroplasmida</taxon>
        <taxon>Theileriidae</taxon>
        <taxon>Theileria</taxon>
    </lineage>
</organism>
<comment type="similarity">
    <text evidence="2">Belongs to the eukaryotic ribosomal protein eS17 family.</text>
</comment>
<dbReference type="EMBL" id="AY033876">
    <property type="protein sequence ID" value="AAK52315.1"/>
    <property type="molecule type" value="mRNA"/>
</dbReference>
<dbReference type="SMR" id="Q967G1"/>
<dbReference type="GO" id="GO:0005829">
    <property type="term" value="C:cytosol"/>
    <property type="evidence" value="ECO:0007669"/>
    <property type="project" value="UniProtKB-ARBA"/>
</dbReference>
<dbReference type="GO" id="GO:1990904">
    <property type="term" value="C:ribonucleoprotein complex"/>
    <property type="evidence" value="ECO:0007669"/>
    <property type="project" value="UniProtKB-KW"/>
</dbReference>
<dbReference type="GO" id="GO:0005840">
    <property type="term" value="C:ribosome"/>
    <property type="evidence" value="ECO:0007669"/>
    <property type="project" value="UniProtKB-KW"/>
</dbReference>
<dbReference type="GO" id="GO:0003735">
    <property type="term" value="F:structural constituent of ribosome"/>
    <property type="evidence" value="ECO:0007669"/>
    <property type="project" value="InterPro"/>
</dbReference>
<dbReference type="GO" id="GO:0006412">
    <property type="term" value="P:translation"/>
    <property type="evidence" value="ECO:0007669"/>
    <property type="project" value="InterPro"/>
</dbReference>
<dbReference type="FunFam" id="1.10.60.20:FF:000001">
    <property type="entry name" value="40S ribosomal protein S17"/>
    <property type="match status" value="1"/>
</dbReference>
<dbReference type="Gene3D" id="1.10.60.20">
    <property type="entry name" value="Ribosomal protein S17e-like"/>
    <property type="match status" value="1"/>
</dbReference>
<dbReference type="HAMAP" id="MF_00511">
    <property type="entry name" value="Ribosomal_eS17"/>
    <property type="match status" value="1"/>
</dbReference>
<dbReference type="InterPro" id="IPR001210">
    <property type="entry name" value="Ribosomal_eS17"/>
</dbReference>
<dbReference type="InterPro" id="IPR018273">
    <property type="entry name" value="Ribosomal_eS17_CS"/>
</dbReference>
<dbReference type="InterPro" id="IPR036401">
    <property type="entry name" value="Ribosomal_eS17_sf"/>
</dbReference>
<dbReference type="NCBIfam" id="NF002242">
    <property type="entry name" value="PRK01151.1"/>
    <property type="match status" value="1"/>
</dbReference>
<dbReference type="PANTHER" id="PTHR10732">
    <property type="entry name" value="40S RIBOSOMAL PROTEIN S17"/>
    <property type="match status" value="1"/>
</dbReference>
<dbReference type="PANTHER" id="PTHR10732:SF0">
    <property type="entry name" value="40S RIBOSOMAL PROTEIN S17"/>
    <property type="match status" value="1"/>
</dbReference>
<dbReference type="Pfam" id="PF00833">
    <property type="entry name" value="Ribosomal_S17e"/>
    <property type="match status" value="1"/>
</dbReference>
<dbReference type="SUPFAM" id="SSF116820">
    <property type="entry name" value="Rps17e-like"/>
    <property type="match status" value="1"/>
</dbReference>
<dbReference type="PROSITE" id="PS00712">
    <property type="entry name" value="RIBOSOMAL_S17E"/>
    <property type="match status" value="1"/>
</dbReference>
<evidence type="ECO:0000250" key="1"/>
<evidence type="ECO:0000305" key="2"/>
<gene>
    <name type="primary">RPS17</name>
</gene>